<keyword id="KW-0378">Hydrolase</keyword>
<keyword id="KW-1185">Reference proteome</keyword>
<protein>
    <recommendedName>
        <fullName evidence="1">Ureidoacrylate amidohydrolase RutB</fullName>
        <ecNumber evidence="1">3.5.1.110</ecNumber>
    </recommendedName>
</protein>
<evidence type="ECO:0000255" key="1">
    <source>
        <dbReference type="HAMAP-Rule" id="MF_00830"/>
    </source>
</evidence>
<reference key="1">
    <citation type="journal article" date="2010" name="J. Bacteriol.">
        <title>Genome sequence of Pantoea ananatis LMG20103, the causative agent of Eucalyptus blight and dieback.</title>
        <authorList>
            <person name="De Maayer P."/>
            <person name="Chan W.Y."/>
            <person name="Venter S.N."/>
            <person name="Toth I.K."/>
            <person name="Birch P.R."/>
            <person name="Joubert F."/>
            <person name="Coutinho T.A."/>
        </authorList>
    </citation>
    <scope>NUCLEOTIDE SEQUENCE [LARGE SCALE GENOMIC DNA]</scope>
    <source>
        <strain>LMG 20103</strain>
    </source>
</reference>
<dbReference type="EC" id="3.5.1.110" evidence="1"/>
<dbReference type="EMBL" id="CP001875">
    <property type="protein sequence ID" value="ADD79201.1"/>
    <property type="molecule type" value="Genomic_DNA"/>
</dbReference>
<dbReference type="RefSeq" id="WP_013027867.1">
    <property type="nucleotide sequence ID" value="NC_013956.2"/>
</dbReference>
<dbReference type="SMR" id="D4GEU5"/>
<dbReference type="STRING" id="706191.PANA_4034"/>
<dbReference type="KEGG" id="pam:PANA_4034"/>
<dbReference type="eggNOG" id="COG1335">
    <property type="taxonomic scope" value="Bacteria"/>
</dbReference>
<dbReference type="HOGENOM" id="CLU_068979_8_0_6"/>
<dbReference type="Proteomes" id="UP000001702">
    <property type="component" value="Chromosome"/>
</dbReference>
<dbReference type="GO" id="GO:0016811">
    <property type="term" value="F:hydrolase activity, acting on carbon-nitrogen (but not peptide) bonds, in linear amides"/>
    <property type="evidence" value="ECO:0007669"/>
    <property type="project" value="UniProtKB-UniRule"/>
</dbReference>
<dbReference type="GO" id="GO:0019740">
    <property type="term" value="P:nitrogen utilization"/>
    <property type="evidence" value="ECO:0007669"/>
    <property type="project" value="UniProtKB-UniRule"/>
</dbReference>
<dbReference type="GO" id="GO:0006212">
    <property type="term" value="P:uracil catabolic process"/>
    <property type="evidence" value="ECO:0007669"/>
    <property type="project" value="UniProtKB-UniRule"/>
</dbReference>
<dbReference type="CDD" id="cd00431">
    <property type="entry name" value="cysteine_hydrolases"/>
    <property type="match status" value="1"/>
</dbReference>
<dbReference type="Gene3D" id="3.40.50.850">
    <property type="entry name" value="Isochorismatase-like"/>
    <property type="match status" value="1"/>
</dbReference>
<dbReference type="HAMAP" id="MF_00830">
    <property type="entry name" value="RutB"/>
    <property type="match status" value="1"/>
</dbReference>
<dbReference type="InterPro" id="IPR000868">
    <property type="entry name" value="Isochorismatase-like_dom"/>
</dbReference>
<dbReference type="InterPro" id="IPR050272">
    <property type="entry name" value="Isochorismatase-like_hydrls"/>
</dbReference>
<dbReference type="InterPro" id="IPR036380">
    <property type="entry name" value="Isochorismatase-like_sf"/>
</dbReference>
<dbReference type="InterPro" id="IPR019916">
    <property type="entry name" value="RutB"/>
</dbReference>
<dbReference type="NCBIfam" id="TIGR03614">
    <property type="entry name" value="RutB"/>
    <property type="match status" value="1"/>
</dbReference>
<dbReference type="PANTHER" id="PTHR43540:SF6">
    <property type="entry name" value="ISOCHORISMATASE-LIKE DOMAIN-CONTAINING PROTEIN"/>
    <property type="match status" value="1"/>
</dbReference>
<dbReference type="PANTHER" id="PTHR43540">
    <property type="entry name" value="PEROXYUREIDOACRYLATE/UREIDOACRYLATE AMIDOHYDROLASE-RELATED"/>
    <property type="match status" value="1"/>
</dbReference>
<dbReference type="Pfam" id="PF00857">
    <property type="entry name" value="Isochorismatase"/>
    <property type="match status" value="1"/>
</dbReference>
<dbReference type="SUPFAM" id="SSF52499">
    <property type="entry name" value="Isochorismatase-like hydrolases"/>
    <property type="match status" value="1"/>
</dbReference>
<gene>
    <name evidence="1" type="primary">rutB</name>
    <name type="ordered locus">PANA_4034</name>
</gene>
<organism>
    <name type="scientific">Pantoea ananatis (strain LMG 20103)</name>
    <dbReference type="NCBI Taxonomy" id="706191"/>
    <lineage>
        <taxon>Bacteria</taxon>
        <taxon>Pseudomonadati</taxon>
        <taxon>Pseudomonadota</taxon>
        <taxon>Gammaproteobacteria</taxon>
        <taxon>Enterobacterales</taxon>
        <taxon>Erwiniaceae</taxon>
        <taxon>Pantoea</taxon>
    </lineage>
</organism>
<accession>D4GEU5</accession>
<proteinExistence type="inferred from homology"/>
<sequence length="250" mass="27483">MMNIVENQTVVRRAPDNAGEERVLAARPEAIGFTPQQTALIVVDMQNAYASQGGYLDLAGFDVSATAPVIANIKVAIAAARAAGIKVIFFQNGWDNQYVEAGGRARPTSINPMRLKTMRKRPELMGKLLAKGDWDYDLVDELQPQPGDIVLPKPRYSGFFNTQLDSLLRSYGIHHLVFTGIATNVCVESTLRDGFFLEYFGVVLEDATHQAGPEFAQKAAIYNIETFFGWVSSVSHFCDAVGYKTEQNAA</sequence>
<comment type="function">
    <text evidence="1">Hydrolyzes ureidoacrylate to form aminoacrylate and carbamate. The carbamate hydrolyzes spontaneously, thereby releasing one of the nitrogen atoms of the pyrimidine ring as ammonia and one of its carbon atoms as CO2.</text>
</comment>
<comment type="catalytic activity">
    <reaction evidence="1">
        <text>(Z)-3-ureidoacrylate + H2O + H(+) = (Z)-3-aminoacrylate + NH4(+) + CO2</text>
        <dbReference type="Rhea" id="RHEA:42624"/>
        <dbReference type="ChEBI" id="CHEBI:15377"/>
        <dbReference type="ChEBI" id="CHEBI:15378"/>
        <dbReference type="ChEBI" id="CHEBI:16526"/>
        <dbReference type="ChEBI" id="CHEBI:28938"/>
        <dbReference type="ChEBI" id="CHEBI:59891"/>
        <dbReference type="ChEBI" id="CHEBI:59894"/>
        <dbReference type="EC" id="3.5.1.110"/>
    </reaction>
</comment>
<comment type="catalytic activity">
    <reaction evidence="1">
        <text>(Z)-3-ureidoacrylate + H2O = (Z)-3-aminoacrylate + carbamate + H(+)</text>
        <dbReference type="Rhea" id="RHEA:31603"/>
        <dbReference type="ChEBI" id="CHEBI:13941"/>
        <dbReference type="ChEBI" id="CHEBI:15377"/>
        <dbReference type="ChEBI" id="CHEBI:15378"/>
        <dbReference type="ChEBI" id="CHEBI:59891"/>
        <dbReference type="ChEBI" id="CHEBI:59894"/>
    </reaction>
</comment>
<comment type="catalytic activity">
    <reaction evidence="1">
        <text>(Z)-2-methylureidoacrylate + H2O + H(+) = (Z)-2-methylaminoacrylate + NH4(+) + CO2</text>
        <dbReference type="Rhea" id="RHEA:42620"/>
        <dbReference type="ChEBI" id="CHEBI:15377"/>
        <dbReference type="ChEBI" id="CHEBI:15378"/>
        <dbReference type="ChEBI" id="CHEBI:16526"/>
        <dbReference type="ChEBI" id="CHEBI:28938"/>
        <dbReference type="ChEBI" id="CHEBI:143783"/>
        <dbReference type="ChEBI" id="CHEBI:145735"/>
        <dbReference type="EC" id="3.5.1.110"/>
    </reaction>
</comment>
<comment type="similarity">
    <text evidence="1">Belongs to the isochorismatase family. RutB subfamily.</text>
</comment>
<name>RUTB_PANAM</name>
<feature type="chain" id="PRO_0000402697" description="Ureidoacrylate amidohydrolase RutB">
    <location>
        <begin position="1"/>
        <end position="250"/>
    </location>
</feature>
<feature type="active site" description="Proton acceptor" evidence="1">
    <location>
        <position position="44"/>
    </location>
</feature>
<feature type="active site" evidence="1">
    <location>
        <position position="153"/>
    </location>
</feature>
<feature type="active site" description="Nucleophile" evidence="1">
    <location>
        <position position="186"/>
    </location>
</feature>